<protein>
    <recommendedName>
        <fullName evidence="4">G-protein coupled receptor str-217</fullName>
    </recommendedName>
</protein>
<gene>
    <name evidence="6" type="primary">str-217</name>
    <name evidence="6" type="ORF">Y102A5C.28</name>
</gene>
<proteinExistence type="evidence at protein level"/>
<keyword id="KW-1003">Cell membrane</keyword>
<keyword id="KW-0297">G-protein coupled receptor</keyword>
<keyword id="KW-0325">Glycoprotein</keyword>
<keyword id="KW-0472">Membrane</keyword>
<keyword id="KW-0675">Receptor</keyword>
<keyword id="KW-1185">Reference proteome</keyword>
<keyword id="KW-0807">Transducer</keyword>
<keyword id="KW-0812">Transmembrane</keyword>
<keyword id="KW-1133">Transmembrane helix</keyword>
<name>ST217_CAEEL</name>
<organism evidence="5">
    <name type="scientific">Caenorhabditis elegans</name>
    <dbReference type="NCBI Taxonomy" id="6239"/>
    <lineage>
        <taxon>Eukaryota</taxon>
        <taxon>Metazoa</taxon>
        <taxon>Ecdysozoa</taxon>
        <taxon>Nematoda</taxon>
        <taxon>Chromadorea</taxon>
        <taxon>Rhabditida</taxon>
        <taxon>Rhabditina</taxon>
        <taxon>Rhabditomorpha</taxon>
        <taxon>Rhabditoidea</taxon>
        <taxon>Rhabditidae</taxon>
        <taxon>Peloderinae</taxon>
        <taxon>Caenorhabditis</taxon>
    </lineage>
</organism>
<reference evidence="5" key="1">
    <citation type="journal article" date="1998" name="Science">
        <title>Genome sequence of the nematode C. elegans: a platform for investigating biology.</title>
        <authorList>
            <consortium name="The C. elegans sequencing consortium"/>
        </authorList>
    </citation>
    <scope>NUCLEOTIDE SEQUENCE [LARGE SCALE GENOMIC DNA]</scope>
    <source>
        <strain evidence="5">Bristol N2</strain>
    </source>
</reference>
<reference evidence="4" key="2">
    <citation type="journal article" date="2018" name="Nature">
        <title>A natural variant and engineered mutation in a GPCR promote DEET resistance in C. elegans.</title>
        <authorList>
            <person name="Dennis E.J."/>
            <person name="Dobosiewicz M."/>
            <person name="Jin X."/>
            <person name="Duvall L.B."/>
            <person name="Hartman P.S."/>
            <person name="Bargmann C.I."/>
            <person name="Vosshall L.B."/>
        </authorList>
    </citation>
    <scope>TISSUE SPECIFICITY</scope>
    <scope>POLYMORPHISM</scope>
    <scope>DISRUPTION PHENOTYPE</scope>
    <scope>ROLE IN RESPONSE TO DEET</scope>
    <scope>MUTAGENESIS OF PRO-314</scope>
</reference>
<accession>Q9XX85</accession>
<evidence type="ECO:0000255" key="1"/>
<evidence type="ECO:0000255" key="2">
    <source>
        <dbReference type="PROSITE-ProRule" id="PRU00498"/>
    </source>
</evidence>
<evidence type="ECO:0000269" key="3">
    <source>
    </source>
</evidence>
<evidence type="ECO:0000305" key="4"/>
<evidence type="ECO:0000312" key="5">
    <source>
        <dbReference type="Proteomes" id="UP000001940"/>
    </source>
</evidence>
<evidence type="ECO:0000312" key="6">
    <source>
        <dbReference type="WormBase" id="Y102A5C.28"/>
    </source>
</evidence>
<dbReference type="EMBL" id="BX284605">
    <property type="protein sequence ID" value="CAA20950.2"/>
    <property type="molecule type" value="Genomic_DNA"/>
</dbReference>
<dbReference type="PIR" id="T26348">
    <property type="entry name" value="T26348"/>
</dbReference>
<dbReference type="RefSeq" id="NP_507300.1">
    <property type="nucleotide sequence ID" value="NM_074899.1"/>
</dbReference>
<dbReference type="SMR" id="Q9XX85"/>
<dbReference type="FunCoup" id="Q9XX85">
    <property type="interactions" value="308"/>
</dbReference>
<dbReference type="STRING" id="6239.Y102A5C.28.1"/>
<dbReference type="GlyCosmos" id="Q9XX85">
    <property type="glycosylation" value="1 site, No reported glycans"/>
</dbReference>
<dbReference type="PaxDb" id="6239-Y102A5C.28"/>
<dbReference type="EnsemblMetazoa" id="Y102A5C.28.1">
    <property type="protein sequence ID" value="Y102A5C.28.1"/>
    <property type="gene ID" value="WBGene00006249"/>
</dbReference>
<dbReference type="GeneID" id="190851"/>
<dbReference type="KEGG" id="cel:CELE_Y102A5C.28"/>
<dbReference type="UCSC" id="Y102A5C.28">
    <property type="organism name" value="c. elegans"/>
</dbReference>
<dbReference type="AGR" id="WB:WBGene00006249"/>
<dbReference type="CTD" id="190851"/>
<dbReference type="WormBase" id="Y102A5C.28">
    <property type="protein sequence ID" value="CE25158"/>
    <property type="gene ID" value="WBGene00006249"/>
    <property type="gene designation" value="str-217"/>
</dbReference>
<dbReference type="eggNOG" id="ENOG502TG6X">
    <property type="taxonomic scope" value="Eukaryota"/>
</dbReference>
<dbReference type="GeneTree" id="ENSGT00970000196029"/>
<dbReference type="HOGENOM" id="CLU_036335_2_0_1"/>
<dbReference type="InParanoid" id="Q9XX85"/>
<dbReference type="OMA" id="PAQMGNY"/>
<dbReference type="OrthoDB" id="5862553at2759"/>
<dbReference type="PhylomeDB" id="Q9XX85"/>
<dbReference type="PRO" id="PR:Q9XX85"/>
<dbReference type="Proteomes" id="UP000001940">
    <property type="component" value="Chromosome V"/>
</dbReference>
<dbReference type="GO" id="GO:0005886">
    <property type="term" value="C:plasma membrane"/>
    <property type="evidence" value="ECO:0000318"/>
    <property type="project" value="GO_Central"/>
</dbReference>
<dbReference type="GO" id="GO:0038022">
    <property type="term" value="F:G protein-coupled olfactory receptor activity"/>
    <property type="evidence" value="ECO:0000318"/>
    <property type="project" value="GO_Central"/>
</dbReference>
<dbReference type="GO" id="GO:0007186">
    <property type="term" value="P:G protein-coupled receptor signaling pathway"/>
    <property type="evidence" value="ECO:0000318"/>
    <property type="project" value="GO_Central"/>
</dbReference>
<dbReference type="GO" id="GO:0042048">
    <property type="term" value="P:olfactory behavior"/>
    <property type="evidence" value="ECO:0000318"/>
    <property type="project" value="GO_Central"/>
</dbReference>
<dbReference type="GO" id="GO:0017085">
    <property type="term" value="P:response to insecticide"/>
    <property type="evidence" value="ECO:0000315"/>
    <property type="project" value="UniProtKB"/>
</dbReference>
<dbReference type="InterPro" id="IPR019428">
    <property type="entry name" value="7TM_GPCR_serpentine_rcpt_Str"/>
</dbReference>
<dbReference type="PANTHER" id="PTHR22943">
    <property type="entry name" value="7-TRANSMEMBRANE DOMAIN RECEPTOR C.ELEGANS"/>
    <property type="match status" value="1"/>
</dbReference>
<dbReference type="PANTHER" id="PTHR22943:SF95">
    <property type="entry name" value="G-PROTEIN COUPLED RECEPTOR STR-217-RELATED"/>
    <property type="match status" value="1"/>
</dbReference>
<dbReference type="Pfam" id="PF10326">
    <property type="entry name" value="7TM_GPCR_Str"/>
    <property type="match status" value="1"/>
</dbReference>
<dbReference type="SUPFAM" id="SSF81321">
    <property type="entry name" value="Family A G protein-coupled receptor-like"/>
    <property type="match status" value="1"/>
</dbReference>
<sequence>MLLFQKTLSRVAAPISVAANLILILLIIFKSPAQMGNYKYLLIGLSIFEMSYAVLDVVSETTVLSIKKSFVVVVPYKDRSFGQETAMDINLIYCGFFGFSMGMFVVIFAYRSFLTTGNTILRKFEGFKIISWFAYPLFYAIVWILVAWGPLASFPEMDIVVRPFLLDELNMTVDEVAYTGRLFYSTIDNSLRYSAILTGVLQWVLTASSLFLVIFFGLRCYFHYGKLVQLTDVQSIRLRQLQNQLFLALVCQATVPLILMHIPVTILYTCCVLNIVFNPFSVATTIALFPAIDPLPTIFIVKNYRVALFEFVCPSCLCWSETLKHMGSNRITSYRSNTVNALSM</sequence>
<comment type="function">
    <text evidence="4">Probable G-protein coupled receptor.</text>
</comment>
<comment type="subcellular location">
    <subcellularLocation>
        <location evidence="4">Cell membrane</location>
        <topology evidence="1">Multi-pass membrane protein</topology>
    </subcellularLocation>
</comment>
<comment type="tissue specificity">
    <text evidence="3">Expressed in the ADL chemosensory neurons.</text>
</comment>
<comment type="polymorphism">
    <text evidence="3">The naturally occurring CB4856 strain isolated in Hawaii carries a deletion of str-217 and is resistant to N,N-diethyl-meta-toluamide (DEET).</text>
</comment>
<comment type="disruption phenotype">
    <text evidence="3">Lack of sensitivity of ADL neurons to N,N-diethyl-meta-toluamide (DEET) with no effect on average pause length of worms following DEET exposure in contrast to wild-type worms which show a marked increase (PubMed:30258230). Does not affect AWC neuron activity in response to DEET (PubMed:30258230).</text>
</comment>
<comment type="miscellaneous">
    <text evidence="3">Mediates sensitivity to N,N-diethyl-meta-toluamide (DEET), the most widely used insect repellent worldwide.</text>
</comment>
<comment type="similarity">
    <text evidence="4">Belongs to the nematode receptor-like protein str family.</text>
</comment>
<feature type="chain" id="PRO_0000449905" description="G-protein coupled receptor str-217">
    <location>
        <begin position="1"/>
        <end position="344"/>
    </location>
</feature>
<feature type="topological domain" description="Extracellular" evidence="4">
    <location>
        <begin position="1"/>
        <end position="10"/>
    </location>
</feature>
<feature type="transmembrane region" description="Helical; Name=1" evidence="1">
    <location>
        <begin position="11"/>
        <end position="31"/>
    </location>
</feature>
<feature type="topological domain" description="Cytoplasmic" evidence="4">
    <location>
        <begin position="32"/>
        <end position="39"/>
    </location>
</feature>
<feature type="transmembrane region" description="Helical; Name=2" evidence="1">
    <location>
        <begin position="40"/>
        <end position="60"/>
    </location>
</feature>
<feature type="topological domain" description="Extracellular" evidence="4">
    <location>
        <begin position="61"/>
        <end position="88"/>
    </location>
</feature>
<feature type="transmembrane region" description="Helical; Name=3" evidence="1">
    <location>
        <begin position="89"/>
        <end position="109"/>
    </location>
</feature>
<feature type="topological domain" description="Cytoplasmic" evidence="4">
    <location>
        <begin position="110"/>
        <end position="128"/>
    </location>
</feature>
<feature type="transmembrane region" description="Helical; Name=4" evidence="1">
    <location>
        <begin position="129"/>
        <end position="149"/>
    </location>
</feature>
<feature type="topological domain" description="Extracellular" evidence="4">
    <location>
        <begin position="150"/>
        <end position="195"/>
    </location>
</feature>
<feature type="transmembrane region" description="Helical; Name=5" evidence="1">
    <location>
        <begin position="196"/>
        <end position="216"/>
    </location>
</feature>
<feature type="topological domain" description="Cytoplasmic" evidence="4">
    <location>
        <begin position="217"/>
        <end position="256"/>
    </location>
</feature>
<feature type="transmembrane region" description="Helical; Name=6" evidence="1">
    <location>
        <begin position="257"/>
        <end position="277"/>
    </location>
</feature>
<feature type="topological domain" description="Extracellular" evidence="4">
    <location>
        <begin position="278"/>
        <end position="279"/>
    </location>
</feature>
<feature type="transmembrane region" description="Helical; Name=7" evidence="1">
    <location>
        <begin position="280"/>
        <end position="300"/>
    </location>
</feature>
<feature type="topological domain" description="Cytoplasmic" evidence="4">
    <location>
        <begin position="301"/>
        <end position="344"/>
    </location>
</feature>
<feature type="glycosylation site" description="N-linked (GlcNAc...) asparagine" evidence="2">
    <location>
        <position position="170"/>
    </location>
</feature>
<feature type="mutagenesis site" description="In LBV003; confers resistance to N,N-diethyl-meta-toluamide (DEET)." evidence="3">
    <original>P</original>
    <variation>S</variation>
    <location>
        <position position="314"/>
    </location>
</feature>